<proteinExistence type="inferred from homology"/>
<gene>
    <name evidence="1" type="primary">trpF</name>
    <name type="ordered locus">TRQ2_0809</name>
</gene>
<organism>
    <name type="scientific">Thermotoga sp. (strain RQ2)</name>
    <dbReference type="NCBI Taxonomy" id="126740"/>
    <lineage>
        <taxon>Bacteria</taxon>
        <taxon>Thermotogati</taxon>
        <taxon>Thermotogota</taxon>
        <taxon>Thermotogae</taxon>
        <taxon>Thermotogales</taxon>
        <taxon>Thermotogaceae</taxon>
        <taxon>Thermotoga</taxon>
    </lineage>
</organism>
<sequence>MVRVKICGITNLEDALFSVESGADAVGFVFYPKSKRYISPEDARRISVELPPFVFRVGVFVNEEPEKILDVASYVQLNAVQLHGEEPIELCRKIAERILVIKAVGISNERDIERALNYREFPVLLDTKTPEYGGSGKTFDWSLILPYRDQFRYLVLSGGLNPDNVRSAIDMVRPFAVDVSSGVEAFPGKKDHDSIKTFIKNAKGL</sequence>
<reference key="1">
    <citation type="journal article" date="2011" name="J. Bacteriol.">
        <title>Genome sequence of Thermotoga sp. strain RQ2, a hyperthermophilic bacterium isolated from a geothermally heated region of the seafloor near Ribeira Quente, the Azores.</title>
        <authorList>
            <person name="Swithers K.S."/>
            <person name="DiPippo J.L."/>
            <person name="Bruce D.C."/>
            <person name="Detter C."/>
            <person name="Tapia R."/>
            <person name="Han S."/>
            <person name="Saunders E."/>
            <person name="Goodwin L.A."/>
            <person name="Han J."/>
            <person name="Woyke T."/>
            <person name="Pitluck S."/>
            <person name="Pennacchio L."/>
            <person name="Nolan M."/>
            <person name="Mikhailova N."/>
            <person name="Lykidis A."/>
            <person name="Land M.L."/>
            <person name="Brettin T."/>
            <person name="Stetter K.O."/>
            <person name="Nelson K.E."/>
            <person name="Gogarten J.P."/>
            <person name="Noll K.M."/>
        </authorList>
    </citation>
    <scope>NUCLEOTIDE SEQUENCE [LARGE SCALE GENOMIC DNA]</scope>
    <source>
        <strain>RQ2</strain>
    </source>
</reference>
<feature type="chain" id="PRO_1000095947" description="N-(5'-phosphoribosyl)anthranilate isomerase">
    <location>
        <begin position="1"/>
        <end position="205"/>
    </location>
</feature>
<dbReference type="EC" id="5.3.1.24" evidence="1"/>
<dbReference type="EMBL" id="CP000969">
    <property type="protein sequence ID" value="ACB09161.1"/>
    <property type="molecule type" value="Genomic_DNA"/>
</dbReference>
<dbReference type="RefSeq" id="WP_011943373.1">
    <property type="nucleotide sequence ID" value="NC_010483.1"/>
</dbReference>
<dbReference type="SMR" id="B1LA13"/>
<dbReference type="KEGG" id="trq:TRQ2_0809"/>
<dbReference type="HOGENOM" id="CLU_076364_2_0_0"/>
<dbReference type="UniPathway" id="UPA00035">
    <property type="reaction ID" value="UER00042"/>
</dbReference>
<dbReference type="Proteomes" id="UP000001687">
    <property type="component" value="Chromosome"/>
</dbReference>
<dbReference type="GO" id="GO:0004640">
    <property type="term" value="F:phosphoribosylanthranilate isomerase activity"/>
    <property type="evidence" value="ECO:0007669"/>
    <property type="project" value="UniProtKB-UniRule"/>
</dbReference>
<dbReference type="GO" id="GO:0000162">
    <property type="term" value="P:L-tryptophan biosynthetic process"/>
    <property type="evidence" value="ECO:0007669"/>
    <property type="project" value="UniProtKB-UniRule"/>
</dbReference>
<dbReference type="CDD" id="cd00405">
    <property type="entry name" value="PRAI"/>
    <property type="match status" value="1"/>
</dbReference>
<dbReference type="FunFam" id="3.20.20.70:FF:000075">
    <property type="entry name" value="Tryptophan biosynthesis protein TRP1"/>
    <property type="match status" value="1"/>
</dbReference>
<dbReference type="Gene3D" id="3.20.20.70">
    <property type="entry name" value="Aldolase class I"/>
    <property type="match status" value="1"/>
</dbReference>
<dbReference type="HAMAP" id="MF_00135">
    <property type="entry name" value="PRAI"/>
    <property type="match status" value="1"/>
</dbReference>
<dbReference type="InterPro" id="IPR013785">
    <property type="entry name" value="Aldolase_TIM"/>
</dbReference>
<dbReference type="InterPro" id="IPR001240">
    <property type="entry name" value="PRAI_dom"/>
</dbReference>
<dbReference type="InterPro" id="IPR011060">
    <property type="entry name" value="RibuloseP-bd_barrel"/>
</dbReference>
<dbReference type="InterPro" id="IPR044643">
    <property type="entry name" value="TrpF_fam"/>
</dbReference>
<dbReference type="NCBIfam" id="NF002298">
    <property type="entry name" value="PRK01222.1-4"/>
    <property type="match status" value="1"/>
</dbReference>
<dbReference type="PANTHER" id="PTHR42894">
    <property type="entry name" value="N-(5'-PHOSPHORIBOSYL)ANTHRANILATE ISOMERASE"/>
    <property type="match status" value="1"/>
</dbReference>
<dbReference type="PANTHER" id="PTHR42894:SF1">
    <property type="entry name" value="N-(5'-PHOSPHORIBOSYL)ANTHRANILATE ISOMERASE"/>
    <property type="match status" value="1"/>
</dbReference>
<dbReference type="Pfam" id="PF00697">
    <property type="entry name" value="PRAI"/>
    <property type="match status" value="1"/>
</dbReference>
<dbReference type="SUPFAM" id="SSF51366">
    <property type="entry name" value="Ribulose-phoshate binding barrel"/>
    <property type="match status" value="1"/>
</dbReference>
<protein>
    <recommendedName>
        <fullName evidence="1">N-(5'-phosphoribosyl)anthranilate isomerase</fullName>
        <shortName evidence="1">PRAI</shortName>
        <ecNumber evidence="1">5.3.1.24</ecNumber>
    </recommendedName>
</protein>
<comment type="catalytic activity">
    <reaction evidence="1">
        <text>N-(5-phospho-beta-D-ribosyl)anthranilate = 1-(2-carboxyphenylamino)-1-deoxy-D-ribulose 5-phosphate</text>
        <dbReference type="Rhea" id="RHEA:21540"/>
        <dbReference type="ChEBI" id="CHEBI:18277"/>
        <dbReference type="ChEBI" id="CHEBI:58613"/>
        <dbReference type="EC" id="5.3.1.24"/>
    </reaction>
</comment>
<comment type="pathway">
    <text evidence="1">Amino-acid biosynthesis; L-tryptophan biosynthesis; L-tryptophan from chorismate: step 3/5.</text>
</comment>
<comment type="similarity">
    <text evidence="1">Belongs to the TrpF family.</text>
</comment>
<name>TRPF_THESQ</name>
<accession>B1LA13</accession>
<keyword id="KW-0028">Amino-acid biosynthesis</keyword>
<keyword id="KW-0057">Aromatic amino acid biosynthesis</keyword>
<keyword id="KW-0413">Isomerase</keyword>
<keyword id="KW-0822">Tryptophan biosynthesis</keyword>
<evidence type="ECO:0000255" key="1">
    <source>
        <dbReference type="HAMAP-Rule" id="MF_00135"/>
    </source>
</evidence>